<organism>
    <name type="scientific">Pseudomonas putida</name>
    <name type="common">Arthrobacter siderocapsulatus</name>
    <dbReference type="NCBI Taxonomy" id="303"/>
    <lineage>
        <taxon>Bacteria</taxon>
        <taxon>Pseudomonadati</taxon>
        <taxon>Pseudomonadota</taxon>
        <taxon>Gammaproteobacteria</taxon>
        <taxon>Pseudomonadales</taxon>
        <taxon>Pseudomonadaceae</taxon>
        <taxon>Pseudomonas</taxon>
    </lineage>
</organism>
<gene>
    <name type="primary">flgI</name>
</gene>
<accession>Q52082</accession>
<feature type="signal peptide" evidence="2">
    <location>
        <begin position="1"/>
        <end position="22"/>
    </location>
</feature>
<feature type="chain" id="PRO_0000009513" description="Flagellar P-ring protein">
    <location>
        <begin position="23"/>
        <end position="367"/>
    </location>
</feature>
<sequence length="367" mass="38195">MFNVRQLIATTLLLSCAFAAQAERLKDIASISGVRSNQLIGYGLVVGLNGTGDQTTQTPFTLQTFNNMLSQFGIKVPAGSGNVQLKNVAAVSVHADLPPFAKPGQVVDITVSSIGNSKSLRGGSLLMTPLKGIDGNVYAIAQGNLVVGGFDAQGRDGSKITVNVPSAGRIPGGASVERAVPSGFNQGNTLTLNLNRPDFTTAKRIVDKVNDLLGPGVAQAVHGGSVRVSAPMDPSQRVDYLSILENLEIDPGQAVAKVIINSRTGTIVIGQNVKVSPAVTHGSLTVTITEDPIVSQPGAFSNGQTAVVPRSRVNAEQEAKPMFKFGPGTTLDEIVRAVNQVGAAPGNLMAILEALKHRPLQADLIVI</sequence>
<keyword id="KW-0975">Bacterial flagellum</keyword>
<keyword id="KW-0574">Periplasm</keyword>
<keyword id="KW-0732">Signal</keyword>
<name>FLGI_PSEPU</name>
<proteinExistence type="inferred from homology"/>
<protein>
    <recommendedName>
        <fullName>Flagellar P-ring protein</fullName>
    </recommendedName>
    <alternativeName>
        <fullName>Basal body P-ring protein</fullName>
    </alternativeName>
</protein>
<dbReference type="EMBL" id="L15385">
    <property type="protein sequence ID" value="AAA62846.1"/>
    <property type="molecule type" value="Genomic_DNA"/>
</dbReference>
<dbReference type="SMR" id="Q52082"/>
<dbReference type="eggNOG" id="COG1706">
    <property type="taxonomic scope" value="Bacteria"/>
</dbReference>
<dbReference type="GO" id="GO:0009428">
    <property type="term" value="C:bacterial-type flagellum basal body, distal rod, P ring"/>
    <property type="evidence" value="ECO:0007669"/>
    <property type="project" value="InterPro"/>
</dbReference>
<dbReference type="GO" id="GO:0030288">
    <property type="term" value="C:outer membrane-bounded periplasmic space"/>
    <property type="evidence" value="ECO:0007669"/>
    <property type="project" value="InterPro"/>
</dbReference>
<dbReference type="GO" id="GO:0005198">
    <property type="term" value="F:structural molecule activity"/>
    <property type="evidence" value="ECO:0007669"/>
    <property type="project" value="InterPro"/>
</dbReference>
<dbReference type="GO" id="GO:0071973">
    <property type="term" value="P:bacterial-type flagellum-dependent cell motility"/>
    <property type="evidence" value="ECO:0007669"/>
    <property type="project" value="InterPro"/>
</dbReference>
<dbReference type="HAMAP" id="MF_00416">
    <property type="entry name" value="FlgI"/>
    <property type="match status" value="1"/>
</dbReference>
<dbReference type="InterPro" id="IPR001782">
    <property type="entry name" value="Flag_FlgI"/>
</dbReference>
<dbReference type="NCBIfam" id="NF003676">
    <property type="entry name" value="PRK05303.1"/>
    <property type="match status" value="1"/>
</dbReference>
<dbReference type="PANTHER" id="PTHR30381">
    <property type="entry name" value="FLAGELLAR P-RING PERIPLASMIC PROTEIN FLGI"/>
    <property type="match status" value="1"/>
</dbReference>
<dbReference type="PANTHER" id="PTHR30381:SF0">
    <property type="entry name" value="FLAGELLAR P-RING PROTEIN"/>
    <property type="match status" value="1"/>
</dbReference>
<dbReference type="Pfam" id="PF02119">
    <property type="entry name" value="FlgI"/>
    <property type="match status" value="1"/>
</dbReference>
<dbReference type="PRINTS" id="PR01010">
    <property type="entry name" value="FLGPRINGFLGI"/>
</dbReference>
<comment type="function">
    <text>Assembles around the rod to form the L-ring and probably protects the motor/basal body from shearing forces during rotation.</text>
</comment>
<comment type="subunit">
    <text evidence="1">The basal body constitutes a major portion of the flagellar organelle and consists of four rings (L,P,S, and M) mounted on a central rod.</text>
</comment>
<comment type="subcellular location">
    <subcellularLocation>
        <location evidence="1">Periplasm</location>
    </subcellularLocation>
    <subcellularLocation>
        <location evidence="1">Bacterial flagellum basal body</location>
    </subcellularLocation>
</comment>
<comment type="similarity">
    <text evidence="3">Belongs to the FlgI family.</text>
</comment>
<reference key="1">
    <citation type="journal article" date="1994" name="Microbiology">
        <title>Molecular cloning of two Pseudomonas flagellin genes and basal body structural genes.</title>
        <authorList>
            <person name="Winstanley C."/>
            <person name="Morgan J.A."/>
            <person name="Pickup R.W."/>
            <person name="Saunders J.R."/>
        </authorList>
    </citation>
    <scope>NUCLEOTIDE SEQUENCE [GENOMIC DNA]</scope>
    <source>
        <strain>PaW8</strain>
    </source>
</reference>
<evidence type="ECO:0000250" key="1"/>
<evidence type="ECO:0000255" key="2"/>
<evidence type="ECO:0000305" key="3"/>